<organism>
    <name type="scientific">Cedrus deodara</name>
    <name type="common">Deodar cedar</name>
    <name type="synonym">Pinus deodara</name>
    <dbReference type="NCBI Taxonomy" id="3322"/>
    <lineage>
        <taxon>Eukaryota</taxon>
        <taxon>Viridiplantae</taxon>
        <taxon>Streptophyta</taxon>
        <taxon>Embryophyta</taxon>
        <taxon>Tracheophyta</taxon>
        <taxon>Spermatophyta</taxon>
        <taxon>Pinopsida</taxon>
        <taxon>Pinidae</taxon>
        <taxon>Conifers I</taxon>
        <taxon>Pinales</taxon>
        <taxon>Pinaceae</taxon>
        <taxon>Cedrus</taxon>
    </lineage>
</organism>
<dbReference type="EMBL" id="AF469704">
    <property type="protein sequence ID" value="AAQ18524.1"/>
    <property type="molecule type" value="Genomic_DNA"/>
</dbReference>
<dbReference type="RefSeq" id="YP_003934141.1">
    <property type="nucleotide sequence ID" value="NC_014575.1"/>
</dbReference>
<dbReference type="SMR" id="Q71LB5"/>
<dbReference type="GeneID" id="9845512"/>
<dbReference type="GO" id="GO:0009535">
    <property type="term" value="C:chloroplast thylakoid membrane"/>
    <property type="evidence" value="ECO:0007669"/>
    <property type="project" value="UniProtKB-SubCell"/>
</dbReference>
<dbReference type="GO" id="GO:0015979">
    <property type="term" value="P:photosynthesis"/>
    <property type="evidence" value="ECO:0007669"/>
    <property type="project" value="InterPro"/>
</dbReference>
<dbReference type="HAMAP" id="MF_00293">
    <property type="entry name" value="PSII_PsbN"/>
    <property type="match status" value="1"/>
</dbReference>
<dbReference type="InterPro" id="IPR003398">
    <property type="entry name" value="PSII_PsbN"/>
</dbReference>
<dbReference type="PANTHER" id="PTHR35326">
    <property type="entry name" value="PROTEIN PSBN"/>
    <property type="match status" value="1"/>
</dbReference>
<dbReference type="PANTHER" id="PTHR35326:SF3">
    <property type="entry name" value="PROTEIN PSBN"/>
    <property type="match status" value="1"/>
</dbReference>
<dbReference type="Pfam" id="PF02468">
    <property type="entry name" value="PsbN"/>
    <property type="match status" value="1"/>
</dbReference>
<reference key="1">
    <citation type="journal article" date="2003" name="Mol. Phylogenet. Evol.">
        <title>Inference of higher-order relationships in the cycads from a large chloroplast data set.</title>
        <authorList>
            <person name="Rai H.S."/>
            <person name="O'Brien H.E."/>
            <person name="Reeves P.A."/>
            <person name="Olmstead R.G."/>
            <person name="Graham S.W."/>
        </authorList>
    </citation>
    <scope>NUCLEOTIDE SEQUENCE [GENOMIC DNA]</scope>
</reference>
<gene>
    <name evidence="1" type="primary">psbN</name>
</gene>
<accession>Q71LB5</accession>
<evidence type="ECO:0000255" key="1">
    <source>
        <dbReference type="HAMAP-Rule" id="MF_00293"/>
    </source>
</evidence>
<geneLocation type="chloroplast"/>
<comment type="function">
    <text evidence="1">May play a role in photosystem I and II biogenesis.</text>
</comment>
<comment type="subcellular location">
    <subcellularLocation>
        <location evidence="1">Plastid</location>
        <location evidence="1">Chloroplast thylakoid membrane</location>
        <topology evidence="1">Single-pass membrane protein</topology>
    </subcellularLocation>
</comment>
<comment type="similarity">
    <text evidence="1">Belongs to the PsbN family.</text>
</comment>
<comment type="caution">
    <text evidence="1">Originally thought to be a component of PSII; based on experiments in Synechocystis, N.tabacum and barley, and its absence from PSII in T.elongatus and T.vulcanus, this is probably not true.</text>
</comment>
<feature type="chain" id="PRO_0000207880" description="Protein PsbN">
    <location>
        <begin position="1"/>
        <end position="43"/>
    </location>
</feature>
<feature type="transmembrane region" description="Helical" evidence="1">
    <location>
        <begin position="5"/>
        <end position="27"/>
    </location>
</feature>
<sequence length="43" mass="4767">METATLVAISISCLLVSFTGYALYTAFGQPSEQLRDPFEDHED</sequence>
<name>PSBN_CEDDE</name>
<protein>
    <recommendedName>
        <fullName evidence="1">Protein PsbN</fullName>
    </recommendedName>
</protein>
<keyword id="KW-0150">Chloroplast</keyword>
<keyword id="KW-0472">Membrane</keyword>
<keyword id="KW-0934">Plastid</keyword>
<keyword id="KW-0793">Thylakoid</keyword>
<keyword id="KW-0812">Transmembrane</keyword>
<keyword id="KW-1133">Transmembrane helix</keyword>
<proteinExistence type="inferred from homology"/>